<keyword id="KW-0997">Cell inner membrane</keyword>
<keyword id="KW-1003">Cell membrane</keyword>
<keyword id="KW-0249">Electron transport</keyword>
<keyword id="KW-0349">Heme</keyword>
<keyword id="KW-0408">Iron</keyword>
<keyword id="KW-0472">Membrane</keyword>
<keyword id="KW-0479">Metal-binding</keyword>
<keyword id="KW-1185">Reference proteome</keyword>
<keyword id="KW-0812">Transmembrane</keyword>
<keyword id="KW-1133">Transmembrane helix</keyword>
<keyword id="KW-0813">Transport</keyword>
<evidence type="ECO:0000250" key="1"/>
<evidence type="ECO:0000255" key="2"/>
<evidence type="ECO:0000269" key="3">
    <source>
    </source>
</evidence>
<evidence type="ECO:0000305" key="4"/>
<proteinExistence type="evidence at protein level"/>
<accession>P33226</accession>
<accession>P77446</accession>
<name>TORC_ECOLI</name>
<reference key="1">
    <citation type="journal article" date="1994" name="Mol. Microbiol.">
        <title>TMAO anaerobic respiration in Escherichia coli: involvement of the tor operon.</title>
        <authorList>
            <person name="Mejean V."/>
            <person name="Iobbi-Nivol C."/>
            <person name="Lepelletier M."/>
            <person name="Giordano G."/>
            <person name="Chippaux M."/>
            <person name="Pascal M.-C."/>
        </authorList>
    </citation>
    <scope>NUCLEOTIDE SEQUENCE [GENOMIC DNA]</scope>
    <source>
        <strain>K12</strain>
    </source>
</reference>
<reference key="2">
    <citation type="submission" date="1994-10" db="EMBL/GenBank/DDBJ databases">
        <authorList>
            <person name="Pascal M.-C."/>
        </authorList>
    </citation>
    <scope>SEQUENCE REVISION TO 73-76</scope>
</reference>
<reference key="3">
    <citation type="journal article" date="1996" name="DNA Res.">
        <title>A 718-kb DNA sequence of the Escherichia coli K-12 genome corresponding to the 12.7-28.0 min region on the linkage map.</title>
        <authorList>
            <person name="Oshima T."/>
            <person name="Aiba H."/>
            <person name="Baba T."/>
            <person name="Fujita K."/>
            <person name="Hayashi K."/>
            <person name="Honjo A."/>
            <person name="Ikemoto K."/>
            <person name="Inada T."/>
            <person name="Itoh T."/>
            <person name="Kajihara M."/>
            <person name="Kanai K."/>
            <person name="Kashimoto K."/>
            <person name="Kimura S."/>
            <person name="Kitagawa M."/>
            <person name="Makino K."/>
            <person name="Masuda S."/>
            <person name="Miki T."/>
            <person name="Mizobuchi K."/>
            <person name="Mori H."/>
            <person name="Motomura K."/>
            <person name="Nakamura Y."/>
            <person name="Nashimoto H."/>
            <person name="Nishio Y."/>
            <person name="Saito N."/>
            <person name="Sampei G."/>
            <person name="Seki Y."/>
            <person name="Tagami H."/>
            <person name="Takemoto K."/>
            <person name="Wada C."/>
            <person name="Yamamoto Y."/>
            <person name="Yano M."/>
            <person name="Horiuchi T."/>
        </authorList>
    </citation>
    <scope>NUCLEOTIDE SEQUENCE [LARGE SCALE GENOMIC DNA]</scope>
    <source>
        <strain>K12 / W3110 / ATCC 27325 / DSM 5911</strain>
    </source>
</reference>
<reference key="4">
    <citation type="journal article" date="1997" name="Science">
        <title>The complete genome sequence of Escherichia coli K-12.</title>
        <authorList>
            <person name="Blattner F.R."/>
            <person name="Plunkett G. III"/>
            <person name="Bloch C.A."/>
            <person name="Perna N.T."/>
            <person name="Burland V."/>
            <person name="Riley M."/>
            <person name="Collado-Vides J."/>
            <person name="Glasner J.D."/>
            <person name="Rode C.K."/>
            <person name="Mayhew G.F."/>
            <person name="Gregor J."/>
            <person name="Davis N.W."/>
            <person name="Kirkpatrick H.A."/>
            <person name="Goeden M.A."/>
            <person name="Rose D.J."/>
            <person name="Mau B."/>
            <person name="Shao Y."/>
        </authorList>
    </citation>
    <scope>NUCLEOTIDE SEQUENCE [LARGE SCALE GENOMIC DNA]</scope>
    <source>
        <strain>K12 / MG1655 / ATCC 47076</strain>
    </source>
</reference>
<reference key="5">
    <citation type="journal article" date="2006" name="Mol. Syst. Biol.">
        <title>Highly accurate genome sequences of Escherichia coli K-12 strains MG1655 and W3110.</title>
        <authorList>
            <person name="Hayashi K."/>
            <person name="Morooka N."/>
            <person name="Yamamoto Y."/>
            <person name="Fujita K."/>
            <person name="Isono K."/>
            <person name="Choi S."/>
            <person name="Ohtsubo E."/>
            <person name="Baba T."/>
            <person name="Wanner B.L."/>
            <person name="Mori H."/>
            <person name="Horiuchi T."/>
        </authorList>
    </citation>
    <scope>NUCLEOTIDE SEQUENCE [LARGE SCALE GENOMIC DNA]</scope>
    <source>
        <strain>K12 / W3110 / ATCC 27325 / DSM 5911</strain>
    </source>
</reference>
<reference key="6">
    <citation type="journal article" date="1994" name="FEMS Microbiol. Lett.">
        <title>A reassessment of the range of c-type cytochromes synthesized by Escherichia coli K-12.</title>
        <authorList>
            <person name="Iobbi-Nivol C."/>
            <person name="Crooke H."/>
            <person name="Griffiths L."/>
            <person name="Grov J."/>
            <person name="Hussain H."/>
            <person name="Pommier J."/>
            <person name="Mejean V."/>
            <person name="Cole J.A."/>
        </authorList>
    </citation>
    <scope>CHARACTERIZATION AS A CYTOCHROME C</scope>
</reference>
<reference key="7">
    <citation type="journal article" date="1999" name="Mol. Microbiol.">
        <title>TorC apocytochrome negatively autoregulates the trimethylamine N-oxide (TMAO) reductase operon in Escherichia coli.</title>
        <authorList>
            <person name="Ansaldi M."/>
            <person name="Bordi C."/>
            <person name="Lepelletier M."/>
            <person name="Mejean V."/>
        </authorList>
    </citation>
    <scope>CHARACTERIZATION</scope>
    <source>
        <strain>K12 / MC4100 / ATCC 35695 / DSM 6574</strain>
    </source>
</reference>
<reference key="8">
    <citation type="journal article" date="2001" name="J. Biol. Chem.">
        <title>Electron transfer and binding of the c-type cytochrome TorC to the trimethylamine N-oxide reductase in Escherichia coli.</title>
        <authorList>
            <person name="Gon S."/>
            <person name="Giudici-Orticoni M.-T."/>
            <person name="Mejean V."/>
            <person name="Iobbi-Nivol C."/>
        </authorList>
    </citation>
    <scope>CHARACTERIZATION</scope>
    <source>
        <strain>K12 / MC4100 / ATCC 35695 / DSM 6574</strain>
    </source>
</reference>
<reference key="9">
    <citation type="journal article" date="2001" name="Proc. Natl. Acad. Sci. U.S.A.">
        <title>An unsuspected autoregulatory pathway involving apocytochrome TorC and sensor TorS in Escherichia coli.</title>
        <authorList>
            <person name="Gon S."/>
            <person name="Jourlin-Castelli C."/>
            <person name="Theraulaz L."/>
            <person name="Mejean V."/>
        </authorList>
    </citation>
    <scope>CHARACTERIZATION</scope>
    <scope>MUTAGENESIS OF CYS-329</scope>
    <source>
        <strain>K12 / MC4100 / ATCC 35695 / DSM 6574</strain>
    </source>
</reference>
<organism>
    <name type="scientific">Escherichia coli (strain K12)</name>
    <dbReference type="NCBI Taxonomy" id="83333"/>
    <lineage>
        <taxon>Bacteria</taxon>
        <taxon>Pseudomonadati</taxon>
        <taxon>Pseudomonadota</taxon>
        <taxon>Gammaproteobacteria</taxon>
        <taxon>Enterobacterales</taxon>
        <taxon>Enterobacteriaceae</taxon>
        <taxon>Escherichia</taxon>
    </lineage>
</organism>
<comment type="function">
    <text>Part of the anaerobic respiratory chain of trimethylamine-N-oxide reductase TorA. Acts by transferring electrons from the membranous menaquinones to TorA. This transfer probably involves an electron transfer pathway from menaquinones to the N-terminal domain of TorC, then from the N-terminus to the C-terminus, and finally to TorA. TorC apocytochrome negatively autoregulates the torCAD operon probably by inhibiting the TorS kinase activity.</text>
</comment>
<comment type="subunit">
    <text>The N-terminal domain interacts with TorA. The immature C-terminal domain can bind to the N-terminal detector region of TorS.</text>
</comment>
<comment type="interaction">
    <interactant intactId="EBI-553710">
        <id>P33226</id>
    </interactant>
    <interactant intactId="EBI-557008">
        <id>P33225</id>
        <label>torA</label>
    </interactant>
    <organismsDiffer>false</organismsDiffer>
    <experiments>3</experiments>
</comment>
<comment type="subcellular location">
    <subcellularLocation>
        <location>Cell inner membrane</location>
        <topology>Single-pass type II membrane protein</topology>
    </subcellularLocation>
</comment>
<comment type="PTM">
    <text evidence="1">Binds 5 heme groups per subunit.</text>
</comment>
<comment type="similarity">
    <text evidence="4">Belongs to the TorC/TorY family.</text>
</comment>
<feature type="chain" id="PRO_0000108427" description="Cytochrome c-type protein TorC">
    <location>
        <begin position="1"/>
        <end position="390"/>
    </location>
</feature>
<feature type="topological domain" description="Cytoplasmic" evidence="2">
    <location>
        <begin position="1"/>
        <end position="16"/>
    </location>
</feature>
<feature type="transmembrane region" description="Helical" evidence="2">
    <location>
        <begin position="17"/>
        <end position="37"/>
    </location>
</feature>
<feature type="topological domain" description="Periplasmic" evidence="2">
    <location>
        <begin position="38"/>
        <end position="390"/>
    </location>
</feature>
<feature type="binding site" description="covalent" evidence="1">
    <location>
        <position position="48"/>
    </location>
    <ligand>
        <name>heme</name>
        <dbReference type="ChEBI" id="CHEBI:30413"/>
        <label>1</label>
    </ligand>
</feature>
<feature type="binding site" description="covalent" evidence="1">
    <location>
        <position position="51"/>
    </location>
    <ligand>
        <name>heme</name>
        <dbReference type="ChEBI" id="CHEBI:30413"/>
        <label>1</label>
    </ligand>
</feature>
<feature type="binding site" description="axial binding residue" evidence="1">
    <location>
        <position position="52"/>
    </location>
    <ligand>
        <name>heme</name>
        <dbReference type="ChEBI" id="CHEBI:30413"/>
        <label>1</label>
    </ligand>
    <ligandPart>
        <name>Fe</name>
        <dbReference type="ChEBI" id="CHEBI:18248"/>
    </ligandPart>
</feature>
<feature type="binding site" description="covalent" evidence="1">
    <location>
        <position position="77"/>
    </location>
    <ligand>
        <name>heme</name>
        <dbReference type="ChEBI" id="CHEBI:30413"/>
        <label>2</label>
    </ligand>
</feature>
<feature type="binding site" description="covalent" evidence="1">
    <location>
        <position position="80"/>
    </location>
    <ligand>
        <name>heme</name>
        <dbReference type="ChEBI" id="CHEBI:30413"/>
        <label>2</label>
    </ligand>
</feature>
<feature type="binding site" description="axial binding residue" evidence="1">
    <location>
        <position position="81"/>
    </location>
    <ligand>
        <name>heme</name>
        <dbReference type="ChEBI" id="CHEBI:30413"/>
        <label>2</label>
    </ligand>
    <ligandPart>
        <name>Fe</name>
        <dbReference type="ChEBI" id="CHEBI:18248"/>
    </ligandPart>
</feature>
<feature type="binding site" description="covalent" evidence="1">
    <location>
        <position position="138"/>
    </location>
    <ligand>
        <name>heme</name>
        <dbReference type="ChEBI" id="CHEBI:30413"/>
        <label>3</label>
    </ligand>
</feature>
<feature type="binding site" description="covalent" evidence="1">
    <location>
        <position position="141"/>
    </location>
    <ligand>
        <name>heme</name>
        <dbReference type="ChEBI" id="CHEBI:30413"/>
        <label>3</label>
    </ligand>
</feature>
<feature type="binding site" description="axial binding residue" evidence="1">
    <location>
        <position position="142"/>
    </location>
    <ligand>
        <name>heme</name>
        <dbReference type="ChEBI" id="CHEBI:30413"/>
        <label>3</label>
    </ligand>
    <ligandPart>
        <name>Fe</name>
        <dbReference type="ChEBI" id="CHEBI:18248"/>
    </ligandPart>
</feature>
<feature type="binding site" description="covalent" evidence="1">
    <location>
        <position position="170"/>
    </location>
    <ligand>
        <name>heme</name>
        <dbReference type="ChEBI" id="CHEBI:30413"/>
        <label>4</label>
    </ligand>
</feature>
<feature type="binding site" description="covalent" evidence="1">
    <location>
        <position position="173"/>
    </location>
    <ligand>
        <name>heme</name>
        <dbReference type="ChEBI" id="CHEBI:30413"/>
        <label>4</label>
    </ligand>
</feature>
<feature type="binding site" description="axial binding residue" evidence="1">
    <location>
        <position position="174"/>
    </location>
    <ligand>
        <name>heme</name>
        <dbReference type="ChEBI" id="CHEBI:30413"/>
        <label>4</label>
    </ligand>
    <ligandPart>
        <name>Fe</name>
        <dbReference type="ChEBI" id="CHEBI:18248"/>
    </ligandPart>
</feature>
<feature type="binding site" description="covalent" evidence="1">
    <location>
        <position position="329"/>
    </location>
    <ligand>
        <name>heme</name>
        <dbReference type="ChEBI" id="CHEBI:30413"/>
        <label>5</label>
    </ligand>
</feature>
<feature type="binding site" description="covalent" evidence="1">
    <location>
        <position position="332"/>
    </location>
    <ligand>
        <name>heme</name>
        <dbReference type="ChEBI" id="CHEBI:30413"/>
        <label>5</label>
    </ligand>
</feature>
<feature type="binding site" description="axial binding residue" evidence="1">
    <location>
        <position position="333"/>
    </location>
    <ligand>
        <name>heme</name>
        <dbReference type="ChEBI" id="CHEBI:30413"/>
        <label>5</label>
    </ligand>
    <ligandPart>
        <name>Fe</name>
        <dbReference type="ChEBI" id="CHEBI:18248"/>
    </ligandPart>
</feature>
<feature type="mutagenesis site" description="Decrease in expression of the torCAD operon." evidence="3">
    <original>C</original>
    <variation>S</variation>
    <location>
        <position position="329"/>
    </location>
</feature>
<feature type="sequence conflict" description="In Ref. 1; CAA52094." evidence="4" ref="1">
    <original>EL</original>
    <variation>DV</variation>
    <location>
        <begin position="194"/>
        <end position="195"/>
    </location>
</feature>
<gene>
    <name type="primary">torC</name>
    <name type="ordered locus">b0996</name>
    <name type="ordered locus">JW0981</name>
</gene>
<protein>
    <recommendedName>
        <fullName>Cytochrome c-type protein TorC</fullName>
    </recommendedName>
</protein>
<sequence>MRKLWNALRRPSARWSVLALVAIGIVIGIALIVLPHVGIKVTSTTEFCVSCHSMQPVYEEYKQSVHFQNASGVRAECHDCHIPPDIPGMVKRKLEASNDIYQTFIAHSIDTPEKFEAKRAELAEREWARMKENNSATCRSCHNYDAMDHAKQHPEAARQMKVAAKDNQSCIDCHKGIAHQLPDMSSGFRKQFDELRASANDSGDTLYSIDIKPIYAAKGDKEASGSLLPASEVKVLKRDGDWLQIEITGWTESAGRQRVLTQFPGKRIFVASIRGDVQQQVKTLEKTTVADTNTEWSKLQATAWMKKGDMVNDIKPIWAYADSLYNGTCNQCHGAPEIAHFDANGWIGTLNGMIGFTSLDKREERTLLKYLQMNASDTAGKAHGDKKEEK</sequence>
<dbReference type="EMBL" id="X73888">
    <property type="protein sequence ID" value="CAA52094.1"/>
    <property type="molecule type" value="Genomic_DNA"/>
</dbReference>
<dbReference type="EMBL" id="U00096">
    <property type="protein sequence ID" value="AAC74081.1"/>
    <property type="molecule type" value="Genomic_DNA"/>
</dbReference>
<dbReference type="EMBL" id="AP009048">
    <property type="protein sequence ID" value="BAA36138.1"/>
    <property type="molecule type" value="Genomic_DNA"/>
</dbReference>
<dbReference type="PIR" id="B64841">
    <property type="entry name" value="S34221"/>
</dbReference>
<dbReference type="RefSeq" id="NP_415516.1">
    <property type="nucleotide sequence ID" value="NC_000913.3"/>
</dbReference>
<dbReference type="RefSeq" id="WP_001230242.1">
    <property type="nucleotide sequence ID" value="NZ_SSZK01000002.1"/>
</dbReference>
<dbReference type="BioGRID" id="4261495">
    <property type="interactions" value="10"/>
</dbReference>
<dbReference type="ComplexPortal" id="CPX-319">
    <property type="entry name" value="Trimethylamine-N-oxide reductase TorAC complex"/>
</dbReference>
<dbReference type="DIP" id="DIP-11014N"/>
<dbReference type="FunCoup" id="P33226">
    <property type="interactions" value="225"/>
</dbReference>
<dbReference type="IntAct" id="P33226">
    <property type="interactions" value="2"/>
</dbReference>
<dbReference type="STRING" id="511145.b0996"/>
<dbReference type="TCDB" id="5.A.3.4.1">
    <property type="family name" value="the prokaryotic molybdopterin-containing oxidoreductase (pmo) family"/>
</dbReference>
<dbReference type="PaxDb" id="511145-b0996"/>
<dbReference type="EnsemblBacteria" id="AAC74081">
    <property type="protein sequence ID" value="AAC74081"/>
    <property type="gene ID" value="b0996"/>
</dbReference>
<dbReference type="GeneID" id="75204082"/>
<dbReference type="GeneID" id="946252"/>
<dbReference type="KEGG" id="ecj:JW0981"/>
<dbReference type="KEGG" id="eco:b0996"/>
<dbReference type="KEGG" id="ecoc:C3026_06070"/>
<dbReference type="PATRIC" id="fig|1411691.4.peg.1275"/>
<dbReference type="EchoBASE" id="EB1762"/>
<dbReference type="eggNOG" id="COG3005">
    <property type="taxonomic scope" value="Bacteria"/>
</dbReference>
<dbReference type="HOGENOM" id="CLU_058814_0_0_6"/>
<dbReference type="InParanoid" id="P33226"/>
<dbReference type="OMA" id="QQAMNEG"/>
<dbReference type="OrthoDB" id="9782159at2"/>
<dbReference type="PhylomeDB" id="P33226"/>
<dbReference type="BioCyc" id="EcoCyc:EG11815-MONOMER"/>
<dbReference type="BioCyc" id="MetaCyc:EG11815-MONOMER"/>
<dbReference type="PRO" id="PR:P33226"/>
<dbReference type="Proteomes" id="UP000000625">
    <property type="component" value="Chromosome"/>
</dbReference>
<dbReference type="GO" id="GO:0009276">
    <property type="term" value="C:Gram-negative-bacterium-type cell wall"/>
    <property type="evidence" value="ECO:0007669"/>
    <property type="project" value="InterPro"/>
</dbReference>
<dbReference type="GO" id="GO:0016020">
    <property type="term" value="C:membrane"/>
    <property type="evidence" value="ECO:0000314"/>
    <property type="project" value="EcoCyc"/>
</dbReference>
<dbReference type="GO" id="GO:0030288">
    <property type="term" value="C:outer membrane-bounded periplasmic space"/>
    <property type="evidence" value="ECO:0000314"/>
    <property type="project" value="EcoCyc"/>
</dbReference>
<dbReference type="GO" id="GO:0005886">
    <property type="term" value="C:plasma membrane"/>
    <property type="evidence" value="ECO:0007669"/>
    <property type="project" value="UniProtKB-SubCell"/>
</dbReference>
<dbReference type="GO" id="GO:1904852">
    <property type="term" value="C:trimethylamine-N-oxide reductase (cytochrome c) complex"/>
    <property type="evidence" value="ECO:0000353"/>
    <property type="project" value="ComplexPortal"/>
</dbReference>
<dbReference type="GO" id="GO:0009055">
    <property type="term" value="F:electron transfer activity"/>
    <property type="evidence" value="ECO:0000314"/>
    <property type="project" value="EcoCyc"/>
</dbReference>
<dbReference type="GO" id="GO:0020037">
    <property type="term" value="F:heme binding"/>
    <property type="evidence" value="ECO:0000314"/>
    <property type="project" value="EcoCyc"/>
</dbReference>
<dbReference type="GO" id="GO:0005506">
    <property type="term" value="F:iron ion binding"/>
    <property type="evidence" value="ECO:0007669"/>
    <property type="project" value="InterPro"/>
</dbReference>
<dbReference type="GO" id="GO:0009060">
    <property type="term" value="P:aerobic respiration"/>
    <property type="evidence" value="ECO:0000314"/>
    <property type="project" value="ComplexPortal"/>
</dbReference>
<dbReference type="GO" id="GO:0019645">
    <property type="term" value="P:anaerobic electron transport chain"/>
    <property type="evidence" value="ECO:0000314"/>
    <property type="project" value="ComplexPortal"/>
</dbReference>
<dbReference type="GO" id="GO:0009061">
    <property type="term" value="P:anaerobic respiration"/>
    <property type="evidence" value="ECO:0000270"/>
    <property type="project" value="EcoCyc"/>
</dbReference>
<dbReference type="GO" id="GO:0009968">
    <property type="term" value="P:negative regulation of signal transduction"/>
    <property type="evidence" value="ECO:0000314"/>
    <property type="project" value="EcoCyc"/>
</dbReference>
<dbReference type="GO" id="GO:0006885">
    <property type="term" value="P:regulation of pH"/>
    <property type="evidence" value="ECO:0000314"/>
    <property type="project" value="ComplexPortal"/>
</dbReference>
<dbReference type="FunFam" id="1.10.3820.10:FF:000001">
    <property type="entry name" value="Cytochrome c-type protein"/>
    <property type="match status" value="1"/>
</dbReference>
<dbReference type="Gene3D" id="1.10.3820.10">
    <property type="entry name" value="Di-heme elbow motif domain"/>
    <property type="match status" value="1"/>
</dbReference>
<dbReference type="InterPro" id="IPR051174">
    <property type="entry name" value="Cytochrome_c-type_ET"/>
</dbReference>
<dbReference type="InterPro" id="IPR009154">
    <property type="entry name" value="Membr-bd_4haem_cyt_TorC"/>
</dbReference>
<dbReference type="InterPro" id="IPR036280">
    <property type="entry name" value="Multihaem_cyt_sf"/>
</dbReference>
<dbReference type="InterPro" id="IPR005126">
    <property type="entry name" value="NapC/NirT_cyt_c_N"/>
</dbReference>
<dbReference type="InterPro" id="IPR038266">
    <property type="entry name" value="NapC/NirT_cytc_sf"/>
</dbReference>
<dbReference type="NCBIfam" id="NF011606">
    <property type="entry name" value="PRK15032.1"/>
    <property type="match status" value="1"/>
</dbReference>
<dbReference type="NCBIfam" id="TIGR02162">
    <property type="entry name" value="torC"/>
    <property type="match status" value="1"/>
</dbReference>
<dbReference type="PANTHER" id="PTHR30333">
    <property type="entry name" value="CYTOCHROME C-TYPE PROTEIN"/>
    <property type="match status" value="1"/>
</dbReference>
<dbReference type="PANTHER" id="PTHR30333:SF2">
    <property type="entry name" value="CYTOCHROME C-TYPE PROTEIN TORC"/>
    <property type="match status" value="1"/>
</dbReference>
<dbReference type="Pfam" id="PF03264">
    <property type="entry name" value="Cytochrom_NNT"/>
    <property type="match status" value="1"/>
</dbReference>
<dbReference type="PIRSF" id="PIRSF000014">
    <property type="entry name" value="4_hem_cytch_TorC"/>
    <property type="match status" value="1"/>
</dbReference>
<dbReference type="SUPFAM" id="SSF48695">
    <property type="entry name" value="Multiheme cytochromes"/>
    <property type="match status" value="1"/>
</dbReference>
<dbReference type="PROSITE" id="PS51008">
    <property type="entry name" value="MULTIHEME_CYTC"/>
    <property type="match status" value="1"/>
</dbReference>